<proteinExistence type="evidence at protein level"/>
<reference key="1">
    <citation type="journal article" date="2004" name="Nat. Genet.">
        <title>Complete sequencing and characterization of 21,243 full-length human cDNAs.</title>
        <authorList>
            <person name="Ota T."/>
            <person name="Suzuki Y."/>
            <person name="Nishikawa T."/>
            <person name="Otsuki T."/>
            <person name="Sugiyama T."/>
            <person name="Irie R."/>
            <person name="Wakamatsu A."/>
            <person name="Hayashi K."/>
            <person name="Sato H."/>
            <person name="Nagai K."/>
            <person name="Kimura K."/>
            <person name="Makita H."/>
            <person name="Sekine M."/>
            <person name="Obayashi M."/>
            <person name="Nishi T."/>
            <person name="Shibahara T."/>
            <person name="Tanaka T."/>
            <person name="Ishii S."/>
            <person name="Yamamoto J."/>
            <person name="Saito K."/>
            <person name="Kawai Y."/>
            <person name="Isono Y."/>
            <person name="Nakamura Y."/>
            <person name="Nagahari K."/>
            <person name="Murakami K."/>
            <person name="Yasuda T."/>
            <person name="Iwayanagi T."/>
            <person name="Wagatsuma M."/>
            <person name="Shiratori A."/>
            <person name="Sudo H."/>
            <person name="Hosoiri T."/>
            <person name="Kaku Y."/>
            <person name="Kodaira H."/>
            <person name="Kondo H."/>
            <person name="Sugawara M."/>
            <person name="Takahashi M."/>
            <person name="Kanda K."/>
            <person name="Yokoi T."/>
            <person name="Furuya T."/>
            <person name="Kikkawa E."/>
            <person name="Omura Y."/>
            <person name="Abe K."/>
            <person name="Kamihara K."/>
            <person name="Katsuta N."/>
            <person name="Sato K."/>
            <person name="Tanikawa M."/>
            <person name="Yamazaki M."/>
            <person name="Ninomiya K."/>
            <person name="Ishibashi T."/>
            <person name="Yamashita H."/>
            <person name="Murakawa K."/>
            <person name="Fujimori K."/>
            <person name="Tanai H."/>
            <person name="Kimata M."/>
            <person name="Watanabe M."/>
            <person name="Hiraoka S."/>
            <person name="Chiba Y."/>
            <person name="Ishida S."/>
            <person name="Ono Y."/>
            <person name="Takiguchi S."/>
            <person name="Watanabe S."/>
            <person name="Yosida M."/>
            <person name="Hotuta T."/>
            <person name="Kusano J."/>
            <person name="Kanehori K."/>
            <person name="Takahashi-Fujii A."/>
            <person name="Hara H."/>
            <person name="Tanase T.-O."/>
            <person name="Nomura Y."/>
            <person name="Togiya S."/>
            <person name="Komai F."/>
            <person name="Hara R."/>
            <person name="Takeuchi K."/>
            <person name="Arita M."/>
            <person name="Imose N."/>
            <person name="Musashino K."/>
            <person name="Yuuki H."/>
            <person name="Oshima A."/>
            <person name="Sasaki N."/>
            <person name="Aotsuka S."/>
            <person name="Yoshikawa Y."/>
            <person name="Matsunawa H."/>
            <person name="Ichihara T."/>
            <person name="Shiohata N."/>
            <person name="Sano S."/>
            <person name="Moriya S."/>
            <person name="Momiyama H."/>
            <person name="Satoh N."/>
            <person name="Takami S."/>
            <person name="Terashima Y."/>
            <person name="Suzuki O."/>
            <person name="Nakagawa S."/>
            <person name="Senoh A."/>
            <person name="Mizoguchi H."/>
            <person name="Goto Y."/>
            <person name="Shimizu F."/>
            <person name="Wakebe H."/>
            <person name="Hishigaki H."/>
            <person name="Watanabe T."/>
            <person name="Sugiyama A."/>
            <person name="Takemoto M."/>
            <person name="Kawakami B."/>
            <person name="Yamazaki M."/>
            <person name="Watanabe K."/>
            <person name="Kumagai A."/>
            <person name="Itakura S."/>
            <person name="Fukuzumi Y."/>
            <person name="Fujimori Y."/>
            <person name="Komiyama M."/>
            <person name="Tashiro H."/>
            <person name="Tanigami A."/>
            <person name="Fujiwara T."/>
            <person name="Ono T."/>
            <person name="Yamada K."/>
            <person name="Fujii Y."/>
            <person name="Ozaki K."/>
            <person name="Hirao M."/>
            <person name="Ohmori Y."/>
            <person name="Kawabata A."/>
            <person name="Hikiji T."/>
            <person name="Kobatake N."/>
            <person name="Inagaki H."/>
            <person name="Ikema Y."/>
            <person name="Okamoto S."/>
            <person name="Okitani R."/>
            <person name="Kawakami T."/>
            <person name="Noguchi S."/>
            <person name="Itoh T."/>
            <person name="Shigeta K."/>
            <person name="Senba T."/>
            <person name="Matsumura K."/>
            <person name="Nakajima Y."/>
            <person name="Mizuno T."/>
            <person name="Morinaga M."/>
            <person name="Sasaki M."/>
            <person name="Togashi T."/>
            <person name="Oyama M."/>
            <person name="Hata H."/>
            <person name="Watanabe M."/>
            <person name="Komatsu T."/>
            <person name="Mizushima-Sugano J."/>
            <person name="Satoh T."/>
            <person name="Shirai Y."/>
            <person name="Takahashi Y."/>
            <person name="Nakagawa K."/>
            <person name="Okumura K."/>
            <person name="Nagase T."/>
            <person name="Nomura N."/>
            <person name="Kikuchi H."/>
            <person name="Masuho Y."/>
            <person name="Yamashita R."/>
            <person name="Nakai K."/>
            <person name="Yada T."/>
            <person name="Nakamura Y."/>
            <person name="Ohara O."/>
            <person name="Isogai T."/>
            <person name="Sugano S."/>
        </authorList>
    </citation>
    <scope>NUCLEOTIDE SEQUENCE [LARGE SCALE MRNA]</scope>
    <scope>VARIANT SER-319</scope>
    <source>
        <tissue>Testis</tissue>
    </source>
</reference>
<reference key="2">
    <citation type="journal article" date="2006" name="Nature">
        <title>DNA sequence of human chromosome 17 and analysis of rearrangement in the human lineage.</title>
        <authorList>
            <person name="Zody M.C."/>
            <person name="Garber M."/>
            <person name="Adams D.J."/>
            <person name="Sharpe T."/>
            <person name="Harrow J."/>
            <person name="Lupski J.R."/>
            <person name="Nicholson C."/>
            <person name="Searle S.M."/>
            <person name="Wilming L."/>
            <person name="Young S.K."/>
            <person name="Abouelleil A."/>
            <person name="Allen N.R."/>
            <person name="Bi W."/>
            <person name="Bloom T."/>
            <person name="Borowsky M.L."/>
            <person name="Bugalter B.E."/>
            <person name="Butler J."/>
            <person name="Chang J.L."/>
            <person name="Chen C.-K."/>
            <person name="Cook A."/>
            <person name="Corum B."/>
            <person name="Cuomo C.A."/>
            <person name="de Jong P.J."/>
            <person name="DeCaprio D."/>
            <person name="Dewar K."/>
            <person name="FitzGerald M."/>
            <person name="Gilbert J."/>
            <person name="Gibson R."/>
            <person name="Gnerre S."/>
            <person name="Goldstein S."/>
            <person name="Grafham D.V."/>
            <person name="Grocock R."/>
            <person name="Hafez N."/>
            <person name="Hagopian D.S."/>
            <person name="Hart E."/>
            <person name="Norman C.H."/>
            <person name="Humphray S."/>
            <person name="Jaffe D.B."/>
            <person name="Jones M."/>
            <person name="Kamal M."/>
            <person name="Khodiyar V.K."/>
            <person name="LaButti K."/>
            <person name="Laird G."/>
            <person name="Lehoczky J."/>
            <person name="Liu X."/>
            <person name="Lokyitsang T."/>
            <person name="Loveland J."/>
            <person name="Lui A."/>
            <person name="Macdonald P."/>
            <person name="Major J.E."/>
            <person name="Matthews L."/>
            <person name="Mauceli E."/>
            <person name="McCarroll S.A."/>
            <person name="Mihalev A.H."/>
            <person name="Mudge J."/>
            <person name="Nguyen C."/>
            <person name="Nicol R."/>
            <person name="O'Leary S.B."/>
            <person name="Osoegawa K."/>
            <person name="Schwartz D.C."/>
            <person name="Shaw-Smith C."/>
            <person name="Stankiewicz P."/>
            <person name="Steward C."/>
            <person name="Swarbreck D."/>
            <person name="Venkataraman V."/>
            <person name="Whittaker C.A."/>
            <person name="Yang X."/>
            <person name="Zimmer A.R."/>
            <person name="Bradley A."/>
            <person name="Hubbard T."/>
            <person name="Birren B.W."/>
            <person name="Rogers J."/>
            <person name="Lander E.S."/>
            <person name="Nusbaum C."/>
        </authorList>
    </citation>
    <scope>NUCLEOTIDE SEQUENCE [LARGE SCALE GENOMIC DNA]</scope>
</reference>
<reference key="3">
    <citation type="submission" date="2005-09" db="EMBL/GenBank/DDBJ databases">
        <authorList>
            <person name="Mural R.J."/>
            <person name="Istrail S."/>
            <person name="Sutton G.G."/>
            <person name="Florea L."/>
            <person name="Halpern A.L."/>
            <person name="Mobarry C.M."/>
            <person name="Lippert R."/>
            <person name="Walenz B."/>
            <person name="Shatkay H."/>
            <person name="Dew I."/>
            <person name="Miller J.R."/>
            <person name="Flanigan M.J."/>
            <person name="Edwards N.J."/>
            <person name="Bolanos R."/>
            <person name="Fasulo D."/>
            <person name="Halldorsson B.V."/>
            <person name="Hannenhalli S."/>
            <person name="Turner R."/>
            <person name="Yooseph S."/>
            <person name="Lu F."/>
            <person name="Nusskern D.R."/>
            <person name="Shue B.C."/>
            <person name="Zheng X.H."/>
            <person name="Zhong F."/>
            <person name="Delcher A.L."/>
            <person name="Huson D.H."/>
            <person name="Kravitz S.A."/>
            <person name="Mouchard L."/>
            <person name="Reinert K."/>
            <person name="Remington K.A."/>
            <person name="Clark A.G."/>
            <person name="Waterman M.S."/>
            <person name="Eichler E.E."/>
            <person name="Adams M.D."/>
            <person name="Hunkapiller M.W."/>
            <person name="Myers E.W."/>
            <person name="Venter J.C."/>
        </authorList>
    </citation>
    <scope>NUCLEOTIDE SEQUENCE [LARGE SCALE GENOMIC DNA]</scope>
</reference>
<reference key="4">
    <citation type="journal article" date="2004" name="Genome Res.">
        <title>The status, quality, and expansion of the NIH full-length cDNA project: the Mammalian Gene Collection (MGC).</title>
        <authorList>
            <consortium name="The MGC Project Team"/>
        </authorList>
    </citation>
    <scope>NUCLEOTIDE SEQUENCE [LARGE SCALE MRNA]</scope>
    <scope>VARIANT GLU-241</scope>
    <source>
        <tissue>Testis</tissue>
    </source>
</reference>
<organism>
    <name type="scientific">Homo sapiens</name>
    <name type="common">Human</name>
    <dbReference type="NCBI Taxonomy" id="9606"/>
    <lineage>
        <taxon>Eukaryota</taxon>
        <taxon>Metazoa</taxon>
        <taxon>Chordata</taxon>
        <taxon>Craniata</taxon>
        <taxon>Vertebrata</taxon>
        <taxon>Euteleostomi</taxon>
        <taxon>Mammalia</taxon>
        <taxon>Eutheria</taxon>
        <taxon>Euarchontoglires</taxon>
        <taxon>Primates</taxon>
        <taxon>Haplorrhini</taxon>
        <taxon>Catarrhini</taxon>
        <taxon>Hominidae</taxon>
        <taxon>Homo</taxon>
    </lineage>
</organism>
<evidence type="ECO:0000255" key="1">
    <source>
        <dbReference type="PROSITE-ProRule" id="PRU00623"/>
    </source>
</evidence>
<evidence type="ECO:0000256" key="2">
    <source>
        <dbReference type="SAM" id="MobiDB-lite"/>
    </source>
</evidence>
<evidence type="ECO:0000269" key="3">
    <source>
    </source>
</evidence>
<evidence type="ECO:0000269" key="4">
    <source>
    </source>
</evidence>
<evidence type="ECO:0000305" key="5"/>
<evidence type="ECO:0000312" key="6">
    <source>
        <dbReference type="HGNC" id="HGNC:26655"/>
    </source>
</evidence>
<gene>
    <name evidence="6" type="primary">MARCHF10</name>
    <name type="synonym">MARCH10</name>
    <name type="synonym">RNF190</name>
</gene>
<dbReference type="EC" id="2.3.2.27"/>
<dbReference type="EMBL" id="AK093076">
    <property type="protein sequence ID" value="BAC04044.1"/>
    <property type="molecule type" value="mRNA"/>
</dbReference>
<dbReference type="EMBL" id="AK097506">
    <property type="protein sequence ID" value="BAC05079.1"/>
    <property type="status" value="ALT_INIT"/>
    <property type="molecule type" value="mRNA"/>
</dbReference>
<dbReference type="EMBL" id="AC005821">
    <property type="status" value="NOT_ANNOTATED_CDS"/>
    <property type="molecule type" value="Genomic_DNA"/>
</dbReference>
<dbReference type="EMBL" id="AC068512">
    <property type="status" value="NOT_ANNOTATED_CDS"/>
    <property type="molecule type" value="Genomic_DNA"/>
</dbReference>
<dbReference type="EMBL" id="AC080038">
    <property type="status" value="NOT_ANNOTATED_CDS"/>
    <property type="molecule type" value="Genomic_DNA"/>
</dbReference>
<dbReference type="EMBL" id="CH471109">
    <property type="protein sequence ID" value="EAW94337.1"/>
    <property type="molecule type" value="Genomic_DNA"/>
</dbReference>
<dbReference type="EMBL" id="CH471109">
    <property type="protein sequence ID" value="EAW94338.1"/>
    <property type="molecule type" value="Genomic_DNA"/>
</dbReference>
<dbReference type="EMBL" id="BC035021">
    <property type="protein sequence ID" value="AAH35021.1"/>
    <property type="status" value="ALT_SEQ"/>
    <property type="molecule type" value="mRNA"/>
</dbReference>
<dbReference type="CCDS" id="CCDS11635.1"/>
<dbReference type="RefSeq" id="NP_001094345.1">
    <property type="nucleotide sequence ID" value="NM_001100875.3"/>
</dbReference>
<dbReference type="RefSeq" id="NP_001275708.1">
    <property type="nucleotide sequence ID" value="NM_001288779.1"/>
</dbReference>
<dbReference type="RefSeq" id="NP_001275709.1">
    <property type="nucleotide sequence ID" value="NM_001288780.1"/>
</dbReference>
<dbReference type="RefSeq" id="NP_689811.2">
    <property type="nucleotide sequence ID" value="NM_152598.4"/>
</dbReference>
<dbReference type="SMR" id="Q8NA82"/>
<dbReference type="BioGRID" id="127813">
    <property type="interactions" value="9"/>
</dbReference>
<dbReference type="FunCoup" id="Q8NA82">
    <property type="interactions" value="22"/>
</dbReference>
<dbReference type="IntAct" id="Q8NA82">
    <property type="interactions" value="10"/>
</dbReference>
<dbReference type="MINT" id="Q8NA82"/>
<dbReference type="STRING" id="9606.ENSP00000463080"/>
<dbReference type="GlyGen" id="Q8NA82">
    <property type="glycosylation" value="3 sites, 1 O-linked glycan (3 sites)"/>
</dbReference>
<dbReference type="iPTMnet" id="Q8NA82"/>
<dbReference type="PhosphoSitePlus" id="Q8NA82"/>
<dbReference type="BioMuta" id="MARCH10"/>
<dbReference type="DMDM" id="296439307"/>
<dbReference type="jPOST" id="Q8NA82"/>
<dbReference type="MassIVE" id="Q8NA82"/>
<dbReference type="PaxDb" id="9606-ENSP00000463080"/>
<dbReference type="PeptideAtlas" id="Q8NA82"/>
<dbReference type="ProteomicsDB" id="72656"/>
<dbReference type="Antibodypedia" id="18645">
    <property type="antibodies" value="186 antibodies from 25 providers"/>
</dbReference>
<dbReference type="DNASU" id="162333"/>
<dbReference type="Ensembl" id="ENST00000311269.10">
    <property type="protein sequence ID" value="ENSP00000311496.5"/>
    <property type="gene ID" value="ENSG00000173838.12"/>
</dbReference>
<dbReference type="Ensembl" id="ENST00000456609.6">
    <property type="protein sequence ID" value="ENSP00000416177.2"/>
    <property type="gene ID" value="ENSG00000173838.12"/>
</dbReference>
<dbReference type="GeneID" id="162333"/>
<dbReference type="KEGG" id="hsa:162333"/>
<dbReference type="MANE-Select" id="ENST00000311269.10">
    <property type="protein sequence ID" value="ENSP00000311496.5"/>
    <property type="RefSeq nucleotide sequence ID" value="NM_152598.4"/>
    <property type="RefSeq protein sequence ID" value="NP_689811.2"/>
</dbReference>
<dbReference type="UCSC" id="uc002jag.6">
    <property type="organism name" value="human"/>
</dbReference>
<dbReference type="AGR" id="HGNC:26655"/>
<dbReference type="CTD" id="162333"/>
<dbReference type="DisGeNET" id="162333"/>
<dbReference type="GeneCards" id="MARCHF10"/>
<dbReference type="HGNC" id="HGNC:26655">
    <property type="gene designation" value="MARCHF10"/>
</dbReference>
<dbReference type="HPA" id="ENSG00000173838">
    <property type="expression patterns" value="Tissue enriched (testis)"/>
</dbReference>
<dbReference type="MIM" id="613337">
    <property type="type" value="gene"/>
</dbReference>
<dbReference type="neXtProt" id="NX_Q8NA82"/>
<dbReference type="OpenTargets" id="ENSG00000173838"/>
<dbReference type="VEuPathDB" id="HostDB:ENSG00000173838"/>
<dbReference type="eggNOG" id="KOG1609">
    <property type="taxonomic scope" value="Eukaryota"/>
</dbReference>
<dbReference type="GeneTree" id="ENSGT00530000063836"/>
<dbReference type="HOGENOM" id="CLU_021725_0_0_1"/>
<dbReference type="InParanoid" id="Q8NA82"/>
<dbReference type="OMA" id="HDYERDW"/>
<dbReference type="OrthoDB" id="264354at2759"/>
<dbReference type="PAN-GO" id="Q8NA82">
    <property type="GO annotations" value="0 GO annotations based on evolutionary models"/>
</dbReference>
<dbReference type="PhylomeDB" id="Q8NA82"/>
<dbReference type="TreeFam" id="TF330816"/>
<dbReference type="PathwayCommons" id="Q8NA82"/>
<dbReference type="SignaLink" id="Q8NA82"/>
<dbReference type="SIGNOR" id="Q8NA82"/>
<dbReference type="UniPathway" id="UPA00143"/>
<dbReference type="BioGRID-ORCS" id="162333">
    <property type="hits" value="13 hits in 1129 CRISPR screens"/>
</dbReference>
<dbReference type="ChiTaRS" id="MARCH10">
    <property type="organism name" value="human"/>
</dbReference>
<dbReference type="GenomeRNAi" id="162333"/>
<dbReference type="Pharos" id="Q8NA82">
    <property type="development level" value="Tbio"/>
</dbReference>
<dbReference type="PRO" id="PR:Q8NA82"/>
<dbReference type="Proteomes" id="UP000005640">
    <property type="component" value="Chromosome 17"/>
</dbReference>
<dbReference type="RNAct" id="Q8NA82">
    <property type="molecule type" value="protein"/>
</dbReference>
<dbReference type="Bgee" id="ENSG00000173838">
    <property type="expression patterns" value="Expressed in left testis and 114 other cell types or tissues"/>
</dbReference>
<dbReference type="ExpressionAtlas" id="Q8NA82">
    <property type="expression patterns" value="baseline and differential"/>
</dbReference>
<dbReference type="GO" id="GO:0016740">
    <property type="term" value="F:transferase activity"/>
    <property type="evidence" value="ECO:0007669"/>
    <property type="project" value="UniProtKB-KW"/>
</dbReference>
<dbReference type="GO" id="GO:0008270">
    <property type="term" value="F:zinc ion binding"/>
    <property type="evidence" value="ECO:0007669"/>
    <property type="project" value="UniProtKB-KW"/>
</dbReference>
<dbReference type="GO" id="GO:0016567">
    <property type="term" value="P:protein ubiquitination"/>
    <property type="evidence" value="ECO:0007669"/>
    <property type="project" value="UniProtKB-UniPathway"/>
</dbReference>
<dbReference type="CDD" id="cd16813">
    <property type="entry name" value="RING_CH-C4HC3_MARCH10"/>
    <property type="match status" value="1"/>
</dbReference>
<dbReference type="Gene3D" id="3.30.40.10">
    <property type="entry name" value="Zinc/RING finger domain, C3HC4 (zinc finger)"/>
    <property type="match status" value="1"/>
</dbReference>
<dbReference type="InterPro" id="IPR042583">
    <property type="entry name" value="MARCH10_RING_CH-C4HC3"/>
</dbReference>
<dbReference type="InterPro" id="IPR052297">
    <property type="entry name" value="RING-CH-type_E3_ubiq-ligase"/>
</dbReference>
<dbReference type="InterPro" id="IPR011016">
    <property type="entry name" value="Znf_RING-CH"/>
</dbReference>
<dbReference type="InterPro" id="IPR013083">
    <property type="entry name" value="Znf_RING/FYVE/PHD"/>
</dbReference>
<dbReference type="PANTHER" id="PTHR14471:SF5">
    <property type="entry name" value="E3 UBIQUITIN-PROTEIN LIGASE MARCHF10-RELATED"/>
    <property type="match status" value="1"/>
</dbReference>
<dbReference type="PANTHER" id="PTHR14471">
    <property type="entry name" value="MARCH7/10 E3 UBIQUITIN PROTEIN LIGASE FAMILY MEMBER"/>
    <property type="match status" value="1"/>
</dbReference>
<dbReference type="Pfam" id="PF12906">
    <property type="entry name" value="RINGv"/>
    <property type="match status" value="1"/>
</dbReference>
<dbReference type="SMART" id="SM00744">
    <property type="entry name" value="RINGv"/>
    <property type="match status" value="1"/>
</dbReference>
<dbReference type="SUPFAM" id="SSF57850">
    <property type="entry name" value="RING/U-box"/>
    <property type="match status" value="1"/>
</dbReference>
<dbReference type="PROSITE" id="PS51292">
    <property type="entry name" value="ZF_RING_CH"/>
    <property type="match status" value="1"/>
</dbReference>
<accession>Q8NA82</accession>
<accession>D3DU09</accession>
<accession>Q8IYS7</accession>
<accession>Q8N7Z7</accession>
<feature type="chain" id="PRO_0000261626" description="Probable E3 ubiquitin-protein ligase MARCHF10">
    <location>
        <begin position="1"/>
        <end position="808"/>
    </location>
</feature>
<feature type="zinc finger region" description="RING-CH-type" evidence="1">
    <location>
        <begin position="651"/>
        <end position="721"/>
    </location>
</feature>
<feature type="region of interest" description="Disordered" evidence="2">
    <location>
        <begin position="33"/>
        <end position="81"/>
    </location>
</feature>
<feature type="region of interest" description="Disordered" evidence="2">
    <location>
        <begin position="101"/>
        <end position="268"/>
    </location>
</feature>
<feature type="region of interest" description="Disordered" evidence="2">
    <location>
        <begin position="284"/>
        <end position="415"/>
    </location>
</feature>
<feature type="region of interest" description="Disordered" evidence="2">
    <location>
        <begin position="773"/>
        <end position="808"/>
    </location>
</feature>
<feature type="compositionally biased region" description="Basic and acidic residues" evidence="2">
    <location>
        <begin position="34"/>
        <end position="49"/>
    </location>
</feature>
<feature type="compositionally biased region" description="Polar residues" evidence="2">
    <location>
        <begin position="237"/>
        <end position="249"/>
    </location>
</feature>
<feature type="compositionally biased region" description="Basic and acidic residues" evidence="2">
    <location>
        <begin position="330"/>
        <end position="349"/>
    </location>
</feature>
<feature type="compositionally biased region" description="Basic and acidic residues" evidence="2">
    <location>
        <begin position="379"/>
        <end position="397"/>
    </location>
</feature>
<feature type="binding site" evidence="1">
    <location>
        <position position="659"/>
    </location>
    <ligand>
        <name>Zn(2+)</name>
        <dbReference type="ChEBI" id="CHEBI:29105"/>
        <label>1</label>
    </ligand>
</feature>
<feature type="binding site" evidence="1">
    <location>
        <position position="662"/>
    </location>
    <ligand>
        <name>Zn(2+)</name>
        <dbReference type="ChEBI" id="CHEBI:29105"/>
        <label>1</label>
    </ligand>
</feature>
<feature type="binding site" evidence="1">
    <location>
        <position position="677"/>
    </location>
    <ligand>
        <name>Zn(2+)</name>
        <dbReference type="ChEBI" id="CHEBI:29105"/>
        <label>2</label>
    </ligand>
</feature>
<feature type="binding site" evidence="1">
    <location>
        <position position="679"/>
    </location>
    <ligand>
        <name>Zn(2+)</name>
        <dbReference type="ChEBI" id="CHEBI:29105"/>
        <label>2</label>
    </ligand>
</feature>
<feature type="binding site" evidence="1">
    <location>
        <position position="687"/>
    </location>
    <ligand>
        <name>Zn(2+)</name>
        <dbReference type="ChEBI" id="CHEBI:29105"/>
        <label>1</label>
    </ligand>
</feature>
<feature type="binding site" evidence="1">
    <location>
        <position position="690"/>
    </location>
    <ligand>
        <name>Zn(2+)</name>
        <dbReference type="ChEBI" id="CHEBI:29105"/>
        <label>1</label>
    </ligand>
</feature>
<feature type="binding site" evidence="1">
    <location>
        <position position="711"/>
    </location>
    <ligand>
        <name>Zn(2+)</name>
        <dbReference type="ChEBI" id="CHEBI:29105"/>
        <label>2</label>
    </ligand>
</feature>
<feature type="binding site" evidence="1">
    <location>
        <position position="714"/>
    </location>
    <ligand>
        <name>Zn(2+)</name>
        <dbReference type="ChEBI" id="CHEBI:29105"/>
        <label>2</label>
    </ligand>
</feature>
<feature type="sequence variant" id="VAR_029461" description="In dbSNP:rs17853369." evidence="4">
    <original>G</original>
    <variation>E</variation>
    <location>
        <position position="241"/>
    </location>
</feature>
<feature type="sequence variant" id="VAR_029462" description="In dbSNP:rs9891498." evidence="3">
    <original>F</original>
    <variation>S</variation>
    <location>
        <position position="319"/>
    </location>
</feature>
<feature type="sequence variant" id="VAR_029463" description="In dbSNP:rs16946335.">
    <original>E</original>
    <variation>K</variation>
    <location>
        <position position="742"/>
    </location>
</feature>
<feature type="sequence conflict" description="In Ref. 1; BAC05079." evidence="5" ref="1">
    <original>H</original>
    <variation>Y</variation>
    <location>
        <position position="734"/>
    </location>
</feature>
<feature type="sequence conflict" description="In Ref. 4; AAH35021." evidence="5" ref="4">
    <original>N</original>
    <variation>S</variation>
    <location>
        <position position="791"/>
    </location>
</feature>
<protein>
    <recommendedName>
        <fullName>Probable E3 ubiquitin-protein ligase MARCHF10</fullName>
        <ecNumber>2.3.2.27</ecNumber>
    </recommendedName>
    <alternativeName>
        <fullName>Membrane-associated RING finger protein 10</fullName>
    </alternativeName>
    <alternativeName>
        <fullName>Membrane-associated RING-CH protein X</fullName>
        <shortName>MARCH-X</shortName>
    </alternativeName>
    <alternativeName>
        <fullName>RING finger protein 190</fullName>
    </alternativeName>
    <alternativeName>
        <fullName evidence="5">RING-type E3 ubiquitin transferase MARCHF10</fullName>
    </alternativeName>
</protein>
<keyword id="KW-0479">Metal-binding</keyword>
<keyword id="KW-1267">Proteomics identification</keyword>
<keyword id="KW-1185">Reference proteome</keyword>
<keyword id="KW-0808">Transferase</keyword>
<keyword id="KW-0833">Ubl conjugation pathway</keyword>
<keyword id="KW-0862">Zinc</keyword>
<keyword id="KW-0863">Zinc-finger</keyword>
<name>MARHA_HUMAN</name>
<comment type="function">
    <text evidence="5">E3 ubiquitin-protein ligase (Probable). E3 ubiquitin ligases accept ubiquitin from an E2 ubiquitin-conjugating enzyme in the form of a thioester and then directly transfer the ubiquitin to targeted substrates.</text>
</comment>
<comment type="catalytic activity">
    <reaction>
        <text>S-ubiquitinyl-[E2 ubiquitin-conjugating enzyme]-L-cysteine + [acceptor protein]-L-lysine = [E2 ubiquitin-conjugating enzyme]-L-cysteine + N(6)-ubiquitinyl-[acceptor protein]-L-lysine.</text>
        <dbReference type="EC" id="2.3.2.27"/>
    </reaction>
</comment>
<comment type="pathway">
    <text>Protein modification; protein ubiquitination.</text>
</comment>
<comment type="interaction">
    <interactant intactId="EBI-2341554">
        <id>Q8NA82</id>
    </interactant>
    <interactant intactId="EBI-10312488">
        <id>Q9NQW6-2</id>
        <label>ANLN</label>
    </interactant>
    <organismsDiffer>false</organismsDiffer>
    <experiments>3</experiments>
</comment>
<comment type="interaction">
    <interactant intactId="EBI-2341554">
        <id>Q8NA82</id>
    </interactant>
    <interactant intactId="EBI-517086">
        <id>O43464</id>
        <label>HTRA2</label>
    </interactant>
    <organismsDiffer>false</organismsDiffer>
    <experiments>3</experiments>
</comment>
<comment type="interaction">
    <interactant intactId="EBI-2341554">
        <id>Q8NA82</id>
    </interactant>
    <interactant intactId="EBI-1055254">
        <id>Q8WXH2</id>
        <label>JPH3</label>
    </interactant>
    <organismsDiffer>false</organismsDiffer>
    <experiments>3</experiments>
</comment>
<comment type="interaction">
    <interactant intactId="EBI-2341554">
        <id>Q8NA82</id>
    </interactant>
    <interactant intactId="EBI-741158">
        <id>Q96HA8</id>
        <label>NTAQ1</label>
    </interactant>
    <organismsDiffer>false</organismsDiffer>
    <experiments>3</experiments>
</comment>
<comment type="interaction">
    <interactant intactId="EBI-2341554">
        <id>Q8NA82</id>
    </interactant>
    <interactant intactId="EBI-5235340">
        <id>Q7Z699</id>
        <label>SPRED1</label>
    </interactant>
    <organismsDiffer>false</organismsDiffer>
    <experiments>3</experiments>
</comment>
<comment type="interaction">
    <interactant intactId="EBI-2341554">
        <id>Q8NA82</id>
    </interactant>
    <interactant intactId="EBI-1048763">
        <id>Q9H3U1</id>
        <label>UNC45A</label>
    </interactant>
    <organismsDiffer>false</organismsDiffer>
    <experiments>7</experiments>
</comment>
<comment type="domain">
    <text evidence="1">The RING-CH-type zinc finger domain is required for E3 ligase activity.</text>
</comment>
<comment type="sequence caution" evidence="5">
    <conflict type="erroneous termination">
        <sequence resource="EMBL-CDS" id="AAH35021"/>
    </conflict>
    <text>Truncated C-terminus.</text>
</comment>
<comment type="sequence caution" evidence="5">
    <conflict type="erroneous initiation">
        <sequence resource="EMBL-CDS" id="BAC05079"/>
    </conflict>
    <text>Truncated N-terminus.</text>
</comment>
<sequence>MLHDARDRQKFFSDVQYLRDMQHKVDSEYQACLRRQEYRRDPNEKKRDQFWGQETSFERSRFSSRSSSKQSSSEEDALTEPRSSIKISAFKCDSKLPAIDQTSVKQKHKSTMTVRKAEKVDPSEPSPADQAPMVLLRKRKPNLRRFTVSPESHSPRASGDRSRQKQQWPAKVPVPRGADQVVQQEGLMCNTKLKRPNQERRNLVPSSQPMTENAPDRAKKGDPSAPSQSELHPALSQAFQGKNSPQVLSEFSGPPLTPTTVGGPRKASFRFRDEDFYSILSLNSRRESDDTEEETQSEECLWVGVRSPCSPSHHKRSRFGGTSTPQAKNKNFEENAENCRGHSSRRSEPSHGSLRISNAMEPATERPSAGQRLSQDPGLPDRESATEKDRGGSENAKKSPLSWDTKSEPRQEVGVNAENVWSDCISVEHRPGTHDSEGYWKDYLNSSQNSLDYFISGRPISPRSSVNSSYNPPASFMHSALRDDIPVDLSMSSTSVHSSDSEGNSGFHVCQPLSPIRNRTPFASAENHNYFPVNSAHEFAVREAEDTTLTSQPQGAPLYTDLLLNPQGNLSLVDSSSSSPSRMNSEGHLHVSGSLQENTPFTFFAVSHFPNQNDNGSRMAASGFTDEKETSKIKADPEKLKKLQESLLEEDSEEEGDLCRICQIAGGSPSNPLLEPCGCVGSLQFVHQECLKKWLKVKITSGADLGAVKTCEMCKQGLLVDLGDFNMIEFYQKHQQSQAQNELMNSGLYLVLLLHLYEQRFAELMRLNHNQVERERLSRNYPQPRTEENENSELGDGNEGSISQSQVV</sequence>